<organism>
    <name type="scientific">Streptococcus pyogenes serotype M3 (strain SSI-1)</name>
    <dbReference type="NCBI Taxonomy" id="193567"/>
    <lineage>
        <taxon>Bacteria</taxon>
        <taxon>Bacillati</taxon>
        <taxon>Bacillota</taxon>
        <taxon>Bacilli</taxon>
        <taxon>Lactobacillales</taxon>
        <taxon>Streptococcaceae</taxon>
        <taxon>Streptococcus</taxon>
    </lineage>
</organism>
<name>Y1478_STRPQ</name>
<gene>
    <name type="ordered locus">SPs0389</name>
</gene>
<sequence length="280" mass="30860">MTWKIVTDSGCDLRSLTRQSKELRFERVPLTLQIGTEIFRDDDGLDIDNMMTTMYQSSKATTSSCPSPEAFLQAYRGADNVIVMTITGTLSGSHNSARLAKNELLEENPNVNIHLIDSLSAGGEMDLLVLELERLINLGLSFEEVVKQITAYQQKTRLIFVLAKVDNLVKNGRLSKLVGKVIGLLNIRMVGKASNKGTLELLQKARGQKKAVSALIEEIQKEGYVGGKVYIAHAQNPKICEQISEKIKSLYPDAVIQTGRTSGLCSFYAEDGGLLMGYEI</sequence>
<comment type="function">
    <text evidence="1">May bind long-chain fatty acids, such as palmitate, and may play a role in lipid transport or fatty acid metabolism.</text>
</comment>
<proteinExistence type="inferred from homology"/>
<protein>
    <recommendedName>
        <fullName>DegV domain-containing protein SPs0389</fullName>
    </recommendedName>
</protein>
<keyword id="KW-0446">Lipid-binding</keyword>
<evidence type="ECO:0000250" key="1"/>
<evidence type="ECO:0000250" key="2">
    <source>
        <dbReference type="UniProtKB" id="Q9X1H9"/>
    </source>
</evidence>
<evidence type="ECO:0000255" key="3">
    <source>
        <dbReference type="PROSITE-ProRule" id="PRU00815"/>
    </source>
</evidence>
<reference key="1">
    <citation type="journal article" date="2003" name="Genome Res.">
        <title>Genome sequence of an M3 strain of Streptococcus pyogenes reveals a large-scale genomic rearrangement in invasive strains and new insights into phage evolution.</title>
        <authorList>
            <person name="Nakagawa I."/>
            <person name="Kurokawa K."/>
            <person name="Yamashita A."/>
            <person name="Nakata M."/>
            <person name="Tomiyasu Y."/>
            <person name="Okahashi N."/>
            <person name="Kawabata S."/>
            <person name="Yamazaki K."/>
            <person name="Shiba T."/>
            <person name="Yasunaga T."/>
            <person name="Hayashi H."/>
            <person name="Hattori M."/>
            <person name="Hamada S."/>
        </authorList>
    </citation>
    <scope>NUCLEOTIDE SEQUENCE [LARGE SCALE GENOMIC DNA]</scope>
    <source>
        <strain>SSI-1</strain>
    </source>
</reference>
<accession>P0DA57</accession>
<accession>Q8K657</accession>
<feature type="chain" id="PRO_0000411316" description="DegV domain-containing protein SPs0389">
    <location>
        <begin position="1"/>
        <end position="280"/>
    </location>
</feature>
<feature type="domain" description="DegV" evidence="3">
    <location>
        <begin position="3"/>
        <end position="280"/>
    </location>
</feature>
<feature type="binding site" evidence="2">
    <location>
        <position position="63"/>
    </location>
    <ligand>
        <name>hexadecanoate</name>
        <dbReference type="ChEBI" id="CHEBI:7896"/>
    </ligand>
</feature>
<feature type="binding site" evidence="2">
    <location>
        <position position="91"/>
    </location>
    <ligand>
        <name>hexadecanoate</name>
        <dbReference type="ChEBI" id="CHEBI:7896"/>
    </ligand>
</feature>
<dbReference type="EMBL" id="BA000034">
    <property type="protein sequence ID" value="BAC63484.1"/>
    <property type="molecule type" value="Genomic_DNA"/>
</dbReference>
<dbReference type="RefSeq" id="WP_002988852.1">
    <property type="nucleotide sequence ID" value="NC_004606.1"/>
</dbReference>
<dbReference type="SMR" id="P0DA57"/>
<dbReference type="KEGG" id="sps:SPs0389"/>
<dbReference type="HOGENOM" id="CLU_048251_2_0_9"/>
<dbReference type="GO" id="GO:0008289">
    <property type="term" value="F:lipid binding"/>
    <property type="evidence" value="ECO:0007669"/>
    <property type="project" value="UniProtKB-KW"/>
</dbReference>
<dbReference type="Gene3D" id="3.30.1180.10">
    <property type="match status" value="1"/>
</dbReference>
<dbReference type="Gene3D" id="2.20.28.50">
    <property type="entry name" value="degv family protein"/>
    <property type="match status" value="1"/>
</dbReference>
<dbReference type="Gene3D" id="3.40.50.10440">
    <property type="entry name" value="Dihydroxyacetone kinase, domain 1"/>
    <property type="match status" value="1"/>
</dbReference>
<dbReference type="InterPro" id="IPR003797">
    <property type="entry name" value="DegV"/>
</dbReference>
<dbReference type="InterPro" id="IPR043168">
    <property type="entry name" value="DegV_C"/>
</dbReference>
<dbReference type="InterPro" id="IPR050270">
    <property type="entry name" value="DegV_domain_contain"/>
</dbReference>
<dbReference type="NCBIfam" id="TIGR00762">
    <property type="entry name" value="DegV"/>
    <property type="match status" value="1"/>
</dbReference>
<dbReference type="PANTHER" id="PTHR33434">
    <property type="entry name" value="DEGV DOMAIN-CONTAINING PROTEIN DR_1986-RELATED"/>
    <property type="match status" value="1"/>
</dbReference>
<dbReference type="PANTHER" id="PTHR33434:SF2">
    <property type="entry name" value="FATTY ACID-BINDING PROTEIN TM_1468"/>
    <property type="match status" value="1"/>
</dbReference>
<dbReference type="Pfam" id="PF02645">
    <property type="entry name" value="DegV"/>
    <property type="match status" value="1"/>
</dbReference>
<dbReference type="SUPFAM" id="SSF82549">
    <property type="entry name" value="DAK1/DegV-like"/>
    <property type="match status" value="1"/>
</dbReference>
<dbReference type="PROSITE" id="PS51482">
    <property type="entry name" value="DEGV"/>
    <property type="match status" value="1"/>
</dbReference>